<dbReference type="EMBL" id="EU029744">
    <property type="protein sequence ID" value="ABU68544.1"/>
    <property type="molecule type" value="mRNA"/>
</dbReference>
<dbReference type="SMR" id="A7X4L4"/>
<dbReference type="GO" id="GO:0005576">
    <property type="term" value="C:extracellular region"/>
    <property type="evidence" value="ECO:0000250"/>
    <property type="project" value="UniProtKB"/>
</dbReference>
<dbReference type="GO" id="GO:0030414">
    <property type="term" value="F:peptidase inhibitor activity"/>
    <property type="evidence" value="ECO:0007669"/>
    <property type="project" value="InterPro"/>
</dbReference>
<dbReference type="GO" id="GO:0042742">
    <property type="term" value="P:defense response to bacterium"/>
    <property type="evidence" value="ECO:0007669"/>
    <property type="project" value="UniProtKB-KW"/>
</dbReference>
<dbReference type="GO" id="GO:0044278">
    <property type="term" value="P:venom-mediated disruption of cell wall in another organism"/>
    <property type="evidence" value="ECO:0000250"/>
    <property type="project" value="UniProtKB"/>
</dbReference>
<dbReference type="Gene3D" id="4.10.75.10">
    <property type="entry name" value="Elafin-like"/>
    <property type="match status" value="1"/>
</dbReference>
<dbReference type="InterPro" id="IPR036645">
    <property type="entry name" value="Elafin-like_sf"/>
</dbReference>
<dbReference type="InterPro" id="IPR008197">
    <property type="entry name" value="WAP_dom"/>
</dbReference>
<dbReference type="Pfam" id="PF00095">
    <property type="entry name" value="WAP"/>
    <property type="match status" value="1"/>
</dbReference>
<dbReference type="SMART" id="SM00217">
    <property type="entry name" value="WAP"/>
    <property type="match status" value="1"/>
</dbReference>
<dbReference type="SUPFAM" id="SSF57256">
    <property type="entry name" value="Elafin-like"/>
    <property type="match status" value="1"/>
</dbReference>
<dbReference type="PROSITE" id="PS51390">
    <property type="entry name" value="WAP"/>
    <property type="match status" value="1"/>
</dbReference>
<protein>
    <recommendedName>
        <fullName evidence="3">Waprin-Lio1</fullName>
    </recommendedName>
</protein>
<reference key="1">
    <citation type="journal article" date="2008" name="Mol. Cell. Proteomics">
        <title>Evolution of an arsenal: structural and functional diversification of the venom system in the advanced snakes (Caenophidia).</title>
        <authorList>
            <person name="Fry B.G."/>
            <person name="Scheib H."/>
            <person name="van der Weerd L."/>
            <person name="Young B."/>
            <person name="McNaughtan J."/>
            <person name="Ramjan S.F.R."/>
            <person name="Vidal N."/>
            <person name="Poelmann R.E."/>
            <person name="Norman J.A."/>
        </authorList>
    </citation>
    <scope>NUCLEOTIDE SEQUENCE [MRNA]</scope>
    <source>
        <tissue>Venom gland</tissue>
    </source>
</reference>
<feature type="signal peptide" evidence="4">
    <location>
        <begin position="1" status="less than"/>
        <end position="8"/>
    </location>
</feature>
<feature type="chain" id="PRO_0000314686" description="Waprin-Lio1">
    <location>
        <begin position="9"/>
        <end position="60"/>
    </location>
</feature>
<feature type="domain" description="WAP" evidence="2">
    <location>
        <begin position="9"/>
        <end position="59"/>
    </location>
</feature>
<feature type="disulfide bond" evidence="2">
    <location>
        <begin position="16"/>
        <end position="46"/>
    </location>
</feature>
<feature type="disulfide bond" evidence="2">
    <location>
        <begin position="29"/>
        <end position="50"/>
    </location>
</feature>
<feature type="disulfide bond" evidence="2">
    <location>
        <begin position="33"/>
        <end position="45"/>
    </location>
</feature>
<feature type="disulfide bond" evidence="2">
    <location>
        <begin position="39"/>
        <end position="55"/>
    </location>
</feature>
<feature type="non-terminal residue">
    <location>
        <position position="1"/>
    </location>
</feature>
<name>WAP1_ERYPO</name>
<evidence type="ECO:0000250" key="1">
    <source>
        <dbReference type="UniProtKB" id="P83952"/>
    </source>
</evidence>
<evidence type="ECO:0000255" key="2">
    <source>
        <dbReference type="PROSITE-ProRule" id="PRU00722"/>
    </source>
</evidence>
<evidence type="ECO:0000303" key="3">
    <source>
    </source>
</evidence>
<evidence type="ECO:0000305" key="4"/>
<evidence type="ECO:0000305" key="5">
    <source>
    </source>
</evidence>
<organism>
    <name type="scientific">Erythrolamprus poecilogyrus</name>
    <name type="common">Water snake</name>
    <name type="synonym">Liophis poecilogyrus</name>
    <dbReference type="NCBI Taxonomy" id="338838"/>
    <lineage>
        <taxon>Eukaryota</taxon>
        <taxon>Metazoa</taxon>
        <taxon>Chordata</taxon>
        <taxon>Craniata</taxon>
        <taxon>Vertebrata</taxon>
        <taxon>Euteleostomi</taxon>
        <taxon>Lepidosauria</taxon>
        <taxon>Squamata</taxon>
        <taxon>Bifurcata</taxon>
        <taxon>Unidentata</taxon>
        <taxon>Episquamata</taxon>
        <taxon>Toxicofera</taxon>
        <taxon>Serpentes</taxon>
        <taxon>Colubroidea</taxon>
        <taxon>Dipsadidae</taxon>
        <taxon>Erythrolamprus</taxon>
    </lineage>
</organism>
<accession>A7X4L4</accession>
<sequence length="60" mass="6381">MLLGTTSAQVVRPGSCPNVDVPIPPLGLCRTTCQTDANCQEGRKCCKNGCGFMTCETARF</sequence>
<comment type="function">
    <text evidence="1">Damages membranes of susceptible bacteria. Has no hemolytic activity. Not toxic to mice. Does not inhibit the proteinases elastase and cathepsin G.</text>
</comment>
<comment type="subcellular location">
    <subcellularLocation>
        <location evidence="4">Secreted</location>
    </subcellularLocation>
</comment>
<comment type="tissue specificity">
    <text evidence="5">Expressed by the venom gland.</text>
</comment>
<comment type="similarity">
    <text evidence="4">Belongs to the venom waprin family.</text>
</comment>
<proteinExistence type="evidence at transcript level"/>
<keyword id="KW-0044">Antibiotic</keyword>
<keyword id="KW-0929">Antimicrobial</keyword>
<keyword id="KW-1015">Disulfide bond</keyword>
<keyword id="KW-0964">Secreted</keyword>
<keyword id="KW-0732">Signal</keyword>